<proteinExistence type="evidence at transcript level"/>
<reference key="1">
    <citation type="submission" date="2015-04" db="EMBL/GenBank/DDBJ databases">
        <title>The draft genome sequence of Fusarium langsethiae, a T-2/HT-2 mycotoxin producer.</title>
        <authorList>
            <person name="Lysoe E."/>
            <person name="Divon H.H."/>
            <person name="Terzi V."/>
            <person name="Orru L."/>
            <person name="Lamontanara A."/>
            <person name="Kolseth A.-K."/>
            <person name="Frandsen R.J."/>
            <person name="Nielsen K."/>
            <person name="Thrane U."/>
        </authorList>
    </citation>
    <scope>NUCLEOTIDE SEQUENCE [LARGE SCALE GENOMIC DNA]</scope>
    <source>
        <strain>Fl201059</strain>
    </source>
</reference>
<reference key="2">
    <citation type="journal article" date="2009" name="Mol. Plant Microbe Interact.">
        <title>Biosynthesis and role in virulence of the histone deacetylase inhibitor depudecin from Alternaria brassicicola.</title>
        <authorList>
            <person name="Wight W.D."/>
            <person name="Kim K.-H."/>
            <person name="Lawrence C.B."/>
            <person name="Walton J.D."/>
        </authorList>
    </citation>
    <scope>FUNCTION</scope>
</reference>
<reference key="3">
    <citation type="journal article" date="2017" name="Mol. Biol. Evol.">
        <title>Differential retention of gene functions in a secondary metabolite cluster.</title>
        <authorList>
            <person name="Reynolds H."/>
            <person name="Slot J.C."/>
            <person name="Divon H.H."/>
            <person name="Lysoee E."/>
            <person name="Proctor R.H."/>
            <person name="Brown D.W."/>
        </authorList>
    </citation>
    <scope>FUNCTION</scope>
    <scope>INDUCTION</scope>
    <scope>PATHWAY</scope>
</reference>
<gene>
    <name evidence="5" type="primary">DEP1</name>
    <name type="ORF">FLAG1_09236</name>
</gene>
<evidence type="ECO:0000250" key="1">
    <source>
        <dbReference type="UniProtKB" id="A0A455R4Z0"/>
    </source>
</evidence>
<evidence type="ECO:0000255" key="2"/>
<evidence type="ECO:0000269" key="3">
    <source>
    </source>
</evidence>
<evidence type="ECO:0000269" key="4">
    <source>
    </source>
</evidence>
<evidence type="ECO:0000303" key="5">
    <source>
    </source>
</evidence>
<evidence type="ECO:0000305" key="6"/>
<evidence type="ECO:0000305" key="7">
    <source>
    </source>
</evidence>
<feature type="chain" id="PRO_0000441936" description="Terpene cyclase DEP1">
    <location>
        <begin position="1"/>
        <end position="365"/>
    </location>
</feature>
<feature type="transmembrane region" description="Helical" evidence="2">
    <location>
        <begin position="10"/>
        <end position="30"/>
    </location>
</feature>
<feature type="transmembrane region" description="Helical" evidence="2">
    <location>
        <begin position="82"/>
        <end position="102"/>
    </location>
</feature>
<feature type="transmembrane region" description="Helical" evidence="2">
    <location>
        <begin position="116"/>
        <end position="136"/>
    </location>
</feature>
<feature type="transmembrane region" description="Helical" evidence="2">
    <location>
        <begin position="158"/>
        <end position="178"/>
    </location>
</feature>
<feature type="transmembrane region" description="Helical" evidence="2">
    <location>
        <begin position="188"/>
        <end position="208"/>
    </location>
</feature>
<feature type="transmembrane region" description="Helical" evidence="2">
    <location>
        <begin position="233"/>
        <end position="253"/>
    </location>
</feature>
<feature type="transmembrane region" description="Helical" evidence="2">
    <location>
        <begin position="297"/>
        <end position="317"/>
    </location>
</feature>
<feature type="transmembrane region" description="Helical" evidence="2">
    <location>
        <begin position="338"/>
        <end position="358"/>
    </location>
</feature>
<accession>A0A0N0DCA4</accession>
<comment type="function">
    <text evidence="3 4">Part of the gene cluster that mediates the biosynthesis of depudecin, a highly oxidized eleven-carbon linear polyketide that acts as a histone deacetylase (HDAC) inhibitor and makes a small contribution to pathogenesis (PubMed:19737099, PubMed:28460114). The reducing polyketide synthase DEP5 is the central enzyme in depudecin biosynthesis by yielding the backbone polyketide chain (PubMed:19737099). The monooxygenases DEP2 and DEP4, as well as the uncharacterized protein DEP1, then act as tailoring enzymes to modify the intermediate polyketide chain into depudecin (PubMed:19737099).</text>
</comment>
<comment type="pathway">
    <text evidence="7">Polyketide biosynthesis.</text>
</comment>
<comment type="subcellular location">
    <subcellularLocation>
        <location evidence="2">Membrane</location>
        <topology evidence="2">Multi-pass membrane protein</topology>
    </subcellularLocation>
</comment>
<comment type="induction">
    <text evidence="4">Expression correlates with the production of depudecin with high levels on oat grain medium, and minimal levels on oat flower medium and complete medium (PubMed:28460114).</text>
</comment>
<comment type="similarity">
    <text evidence="6">Belongs to the membrane-bound ascI terpene cyclase family.</text>
</comment>
<organism>
    <name type="scientific">Fusarium langsethiae</name>
    <dbReference type="NCBI Taxonomy" id="179993"/>
    <lineage>
        <taxon>Eukaryota</taxon>
        <taxon>Fungi</taxon>
        <taxon>Dikarya</taxon>
        <taxon>Ascomycota</taxon>
        <taxon>Pezizomycotina</taxon>
        <taxon>Sordariomycetes</taxon>
        <taxon>Hypocreomycetidae</taxon>
        <taxon>Hypocreales</taxon>
        <taxon>Nectriaceae</taxon>
        <taxon>Fusarium</taxon>
    </lineage>
</organism>
<sequence length="365" mass="40524">MFQTSRSQLLYLSALGVWGLWGYAYFNGMFTRLDTITRTLHFPDNRPLRDSYTGLGPLDKQLTLLSVFYDVLTNSLSSGPRLLFFDINYAVACTNLWTLIESRRRGVRSWFLKYPAWAMVLCNANGAAIVLPIYLYCVCRSKARLRDPVVPLHEAVALPIITVVMLLQPLLIFAPAWFGYSGSETHHALIALFQVAPVIVLGLYVGITSLLSYHFPATSLSSKEYKKWISASLILAGSVASAVHIYTLTGALFTRDSDVSLTRLFVPTGGFTDPIKTLVSNENLLAEYAALLENLHLFSQWDWIVVCLTSVVYAQLLLSRREGLKVNKPAVPYEAQEMIYLTIATVVLGPGGAGSFALAIREARI</sequence>
<name>DEP1_FUSLA</name>
<keyword id="KW-0413">Isomerase</keyword>
<keyword id="KW-0472">Membrane</keyword>
<keyword id="KW-1185">Reference proteome</keyword>
<keyword id="KW-0812">Transmembrane</keyword>
<keyword id="KW-1133">Transmembrane helix</keyword>
<protein>
    <recommendedName>
        <fullName evidence="1">Terpene cyclase DEP1</fullName>
        <ecNumber evidence="1">5.4.99.-</ecNumber>
    </recommendedName>
    <alternativeName>
        <fullName evidence="5">Depudecin biosynthesis cluster protein 1</fullName>
    </alternativeName>
</protein>
<dbReference type="EC" id="5.4.99.-" evidence="1"/>
<dbReference type="EMBL" id="JXCE01000338">
    <property type="protein sequence ID" value="KPA37945.1"/>
    <property type="molecule type" value="Genomic_DNA"/>
</dbReference>
<dbReference type="OrthoDB" id="72269at2759"/>
<dbReference type="Proteomes" id="UP000037904">
    <property type="component" value="Unassembled WGS sequence"/>
</dbReference>
<dbReference type="GO" id="GO:0016020">
    <property type="term" value="C:membrane"/>
    <property type="evidence" value="ECO:0007669"/>
    <property type="project" value="UniProtKB-SubCell"/>
</dbReference>
<dbReference type="GO" id="GO:0016853">
    <property type="term" value="F:isomerase activity"/>
    <property type="evidence" value="ECO:0007669"/>
    <property type="project" value="UniProtKB-KW"/>
</dbReference>